<gene>
    <name evidence="1" type="primary">NS</name>
</gene>
<accession>Q0A2Q9</accession>
<sequence>MDSNTVSSFQDILMRMSKMQLGSSSEDLNGMITQFESLRLYRDSLGEAVMRMGDLHSLQNRNGKWREQLSQKFEEIRWLIEEVRHRLKITENSFEQITFMQALQLLLEVEQEIRTFSFQLI</sequence>
<organismHost>
    <name type="scientific">Aves</name>
    <dbReference type="NCBI Taxonomy" id="8782"/>
</organismHost>
<organismHost>
    <name type="scientific">Equus caballus</name>
    <name type="common">Horse</name>
    <dbReference type="NCBI Taxonomy" id="9796"/>
</organismHost>
<organismHost>
    <name type="scientific">Homo sapiens</name>
    <name type="common">Human</name>
    <dbReference type="NCBI Taxonomy" id="9606"/>
</organismHost>
<organismHost>
    <name type="scientific">Phocidae</name>
    <name type="common">true seals</name>
    <dbReference type="NCBI Taxonomy" id="9709"/>
</organismHost>
<dbReference type="EMBL" id="CY015023">
    <property type="protein sequence ID" value="ABI85024.1"/>
    <property type="molecule type" value="Genomic_RNA"/>
</dbReference>
<dbReference type="SMR" id="Q0A2Q9"/>
<dbReference type="GO" id="GO:0042025">
    <property type="term" value="C:host cell nucleus"/>
    <property type="evidence" value="ECO:0007669"/>
    <property type="project" value="UniProtKB-SubCell"/>
</dbReference>
<dbReference type="GO" id="GO:0044423">
    <property type="term" value="C:virion component"/>
    <property type="evidence" value="ECO:0007669"/>
    <property type="project" value="UniProtKB-UniRule"/>
</dbReference>
<dbReference type="GO" id="GO:0039675">
    <property type="term" value="P:exit of virus from host cell nucleus through nuclear pore"/>
    <property type="evidence" value="ECO:0007669"/>
    <property type="project" value="UniProtKB-UniRule"/>
</dbReference>
<dbReference type="Gene3D" id="1.10.287.230">
    <property type="match status" value="1"/>
</dbReference>
<dbReference type="Gene3D" id="1.10.287.10">
    <property type="entry name" value="S15/NS1, RNA-binding"/>
    <property type="match status" value="1"/>
</dbReference>
<dbReference type="HAMAP" id="MF_04067">
    <property type="entry name" value="INFV_NEP"/>
    <property type="match status" value="1"/>
</dbReference>
<dbReference type="InterPro" id="IPR000968">
    <property type="entry name" value="Flu_NS2"/>
</dbReference>
<dbReference type="Pfam" id="PF00601">
    <property type="entry name" value="Flu_NS2"/>
    <property type="match status" value="1"/>
</dbReference>
<dbReference type="SUPFAM" id="SSF101156">
    <property type="entry name" value="Nonstructural protein ns2, Nep, M1-binding domain"/>
    <property type="match status" value="1"/>
</dbReference>
<organism>
    <name type="scientific">Influenza A virus (strain A/Chicken/Victoria/1/1985 H7N7)</name>
    <dbReference type="NCBI Taxonomy" id="402520"/>
    <lineage>
        <taxon>Viruses</taxon>
        <taxon>Riboviria</taxon>
        <taxon>Orthornavirae</taxon>
        <taxon>Negarnaviricota</taxon>
        <taxon>Polyploviricotina</taxon>
        <taxon>Insthoviricetes</taxon>
        <taxon>Articulavirales</taxon>
        <taxon>Orthomyxoviridae</taxon>
        <taxon>Alphainfluenzavirus</taxon>
        <taxon>Alphainfluenzavirus influenzae</taxon>
        <taxon>Influenza A virus</taxon>
    </lineage>
</organism>
<name>NEP_I85A3</name>
<reference key="1">
    <citation type="journal article" date="2006" name="Science">
        <title>Large-scale sequence analysis of avian influenza isolates.</title>
        <authorList>
            <person name="Obenauer J.C."/>
            <person name="Denson J."/>
            <person name="Mehta P.K."/>
            <person name="Su X."/>
            <person name="Mukatira S."/>
            <person name="Finkelstein D.B."/>
            <person name="Xu X."/>
            <person name="Wang J."/>
            <person name="Ma J."/>
            <person name="Fan Y."/>
            <person name="Rakestraw K.M."/>
            <person name="Webster R.G."/>
            <person name="Hoffmann E."/>
            <person name="Krauss S."/>
            <person name="Zheng J."/>
            <person name="Zhang Z."/>
            <person name="Naeve C.W."/>
        </authorList>
    </citation>
    <scope>NUCLEOTIDE SEQUENCE [GENOMIC RNA]</scope>
</reference>
<evidence type="ECO:0000255" key="1">
    <source>
        <dbReference type="HAMAP-Rule" id="MF_04067"/>
    </source>
</evidence>
<comment type="function">
    <text evidence="1">Mediates the nuclear export of encapsidated genomic RNAs (ribonucleoproteins, RNPs). Acts as an adapter between viral RNPs complexes and the nuclear export machinery of the cell. Possesses no intrinsic RNA-binding activity, but includes a C-terminal M1-binding domain. This domain is believed to allow recognition of RNPs bound to the protein M1. Since protein M1 is not available in large quantities before late stages of infection, such an indirect recognition mechanism probably ensures that genomic RNPs are not exported from the host nucleus until sufficient quantities of viral mRNA and progeny genomic RNA have been synthesized. Furthermore, the RNPs enter the host cytoplasm only when associated with the M1 protein that is necessary to guide them to the plasma membrane. May down-regulate viral RNA synthesis when overproduced.</text>
</comment>
<comment type="subunit">
    <text evidence="1">Interacts with protein M1. May interact with host nucleoporin RAB/HRB and exportin XPO1/CRM1.</text>
</comment>
<comment type="subcellular location">
    <subcellularLocation>
        <location evidence="1">Virion</location>
    </subcellularLocation>
    <subcellularLocation>
        <location evidence="1">Host nucleus</location>
    </subcellularLocation>
</comment>
<comment type="alternative products">
    <event type="alternative splicing"/>
    <isoform>
        <id>Q0A2Q9-1</id>
        <name>NEP</name>
        <name>NS2</name>
        <sequence type="displayed"/>
    </isoform>
    <isoform>
        <id>Q0A2Q8-1</id>
        <name>NS1</name>
        <sequence type="external"/>
    </isoform>
</comment>
<comment type="similarity">
    <text evidence="1">Belongs to the influenza viruses NEP family.</text>
</comment>
<feature type="chain" id="PRO_0000324228" description="Nuclear export protein">
    <location>
        <begin position="1"/>
        <end position="121"/>
    </location>
</feature>
<feature type="short sequence motif" description="Nuclear export signal" evidence="1">
    <location>
        <begin position="12"/>
        <end position="21"/>
    </location>
</feature>
<feature type="short sequence motif" description="Nuclear export signal" evidence="1">
    <location>
        <begin position="85"/>
        <end position="94"/>
    </location>
</feature>
<protein>
    <recommendedName>
        <fullName evidence="1">Nuclear export protein</fullName>
        <shortName evidence="1">NEP</shortName>
    </recommendedName>
    <alternativeName>
        <fullName evidence="1">Non-structural protein 2</fullName>
        <shortName evidence="1">NS2</shortName>
    </alternativeName>
</protein>
<keyword id="KW-0025">Alternative splicing</keyword>
<keyword id="KW-1048">Host nucleus</keyword>
<keyword id="KW-0945">Host-virus interaction</keyword>
<keyword id="KW-0813">Transport</keyword>
<keyword id="KW-0946">Virion</keyword>
<proteinExistence type="inferred from homology"/>